<evidence type="ECO:0000255" key="1">
    <source>
        <dbReference type="HAMAP-Rule" id="MF_01854"/>
    </source>
</evidence>
<dbReference type="EC" id="3.1.3.11" evidence="1"/>
<dbReference type="EMBL" id="CP000721">
    <property type="protein sequence ID" value="ABR36650.1"/>
    <property type="molecule type" value="Genomic_DNA"/>
</dbReference>
<dbReference type="RefSeq" id="WP_012060697.1">
    <property type="nucleotide sequence ID" value="NC_009617.1"/>
</dbReference>
<dbReference type="GeneID" id="66347404"/>
<dbReference type="KEGG" id="cbe:Cbei_4541"/>
<dbReference type="eggNOG" id="COG3855">
    <property type="taxonomic scope" value="Bacteria"/>
</dbReference>
<dbReference type="HOGENOM" id="CLU_028392_2_0_9"/>
<dbReference type="UniPathway" id="UPA00138"/>
<dbReference type="Proteomes" id="UP000000565">
    <property type="component" value="Chromosome"/>
</dbReference>
<dbReference type="GO" id="GO:0042132">
    <property type="term" value="F:fructose 1,6-bisphosphate 1-phosphatase activity"/>
    <property type="evidence" value="ECO:0007669"/>
    <property type="project" value="UniProtKB-UniRule"/>
</dbReference>
<dbReference type="GO" id="GO:0006094">
    <property type="term" value="P:gluconeogenesis"/>
    <property type="evidence" value="ECO:0007669"/>
    <property type="project" value="UniProtKB-UniRule"/>
</dbReference>
<dbReference type="Gene3D" id="3.60.21.10">
    <property type="match status" value="1"/>
</dbReference>
<dbReference type="HAMAP" id="MF_01854">
    <property type="entry name" value="FBPase_class3"/>
    <property type="match status" value="1"/>
</dbReference>
<dbReference type="InterPro" id="IPR009164">
    <property type="entry name" value="FBPtase_class3"/>
</dbReference>
<dbReference type="InterPro" id="IPR029052">
    <property type="entry name" value="Metallo-depent_PP-like"/>
</dbReference>
<dbReference type="Pfam" id="PF06874">
    <property type="entry name" value="FBPase_2"/>
    <property type="match status" value="1"/>
</dbReference>
<dbReference type="PIRSF" id="PIRSF000906">
    <property type="entry name" value="FBPtase_Bacill"/>
    <property type="match status" value="1"/>
</dbReference>
<dbReference type="SUPFAM" id="SSF56300">
    <property type="entry name" value="Metallo-dependent phosphatases"/>
    <property type="match status" value="1"/>
</dbReference>
<gene>
    <name evidence="1" type="primary">fbp2</name>
    <name type="ordered locus">Cbei_4541</name>
</gene>
<accession>A6M220</accession>
<name>F16C2_CLOB8</name>
<comment type="catalytic activity">
    <reaction evidence="1">
        <text>beta-D-fructose 1,6-bisphosphate + H2O = beta-D-fructose 6-phosphate + phosphate</text>
        <dbReference type="Rhea" id="RHEA:11064"/>
        <dbReference type="ChEBI" id="CHEBI:15377"/>
        <dbReference type="ChEBI" id="CHEBI:32966"/>
        <dbReference type="ChEBI" id="CHEBI:43474"/>
        <dbReference type="ChEBI" id="CHEBI:57634"/>
        <dbReference type="EC" id="3.1.3.11"/>
    </reaction>
</comment>
<comment type="cofactor">
    <cofactor evidence="1">
        <name>Mn(2+)</name>
        <dbReference type="ChEBI" id="CHEBI:29035"/>
    </cofactor>
</comment>
<comment type="pathway">
    <text evidence="1">Carbohydrate biosynthesis; gluconeogenesis.</text>
</comment>
<comment type="similarity">
    <text evidence="1">Belongs to the FBPase class 3 family.</text>
</comment>
<sequence length="653" mass="75466">MEKYDDIKYLSLLAKQYPTIAAASTEIINLEAILNLPKGTEHFLADLHGEYEPFVHVLKNGSGAIKRKIQEVFENSLMDCEKRSLTTLVYYPEQKLEIVLREEKDINDWYKINLYRLIELCRHVSSKYTRSKVRKALPPDFSYIIEELLHEESDNNDKQGYYDGIINTIIEIERAQEFIVALSKLIQRLVIDRLHIIGDIFDRGPRPDIILDTLINYHSVDIQWGNHDILWMGAASGNTTCIANVLRIAARYSNLDVIEDIYGINLLPLATFALKHYKNDNCIAFVPKNTDETLYGASEIELISKMHKAITIIQFKLEYEIIKRRPEFNMDHRLLLDKINYSDGTITLNNITYELCDKSFPTININNPFELTSDEKKLVSKLQISFINSDKLQKHVLFLFNKGRLYLTYNSNLLFHGCIPLNKDKTFKSMTIHGEEYKGKKLLDKFDSLAREGYFSTRGSAEKLYGIDIMWYLWTGACSSLFGKEDMTTFERYFIKDKSTHKEKKNPYYNFRDSEEMCNMIFEEFGLDPAESRIINGHVPVKNKFGENPIKCNGKLIVIDGGFAKAYRSQTGLAGYTLTYNSYGLQLISHQPFKSIEDAFSKETDILSSTQIVEKLDRKKVGDTDIGKELKNQIKDLKLLLKAYRKGLINEVR</sequence>
<feature type="chain" id="PRO_0000363079" description="Fructose-1,6-bisphosphatase class 3 2">
    <location>
        <begin position="1"/>
        <end position="653"/>
    </location>
</feature>
<proteinExistence type="inferred from homology"/>
<protein>
    <recommendedName>
        <fullName evidence="1">Fructose-1,6-bisphosphatase class 3 2</fullName>
        <shortName evidence="1">FBPase class 3 2</shortName>
        <ecNumber evidence="1">3.1.3.11</ecNumber>
    </recommendedName>
    <alternativeName>
        <fullName evidence="1">D-fructose-1,6-bisphosphate 1-phosphohydrolase class 3 2</fullName>
    </alternativeName>
</protein>
<organism>
    <name type="scientific">Clostridium beijerinckii (strain ATCC 51743 / NCIMB 8052)</name>
    <name type="common">Clostridium acetobutylicum</name>
    <dbReference type="NCBI Taxonomy" id="290402"/>
    <lineage>
        <taxon>Bacteria</taxon>
        <taxon>Bacillati</taxon>
        <taxon>Bacillota</taxon>
        <taxon>Clostridia</taxon>
        <taxon>Eubacteriales</taxon>
        <taxon>Clostridiaceae</taxon>
        <taxon>Clostridium</taxon>
    </lineage>
</organism>
<reference key="1">
    <citation type="submission" date="2007-06" db="EMBL/GenBank/DDBJ databases">
        <title>Complete sequence of Clostridium beijerinckii NCIMB 8052.</title>
        <authorList>
            <consortium name="US DOE Joint Genome Institute"/>
            <person name="Copeland A."/>
            <person name="Lucas S."/>
            <person name="Lapidus A."/>
            <person name="Barry K."/>
            <person name="Detter J.C."/>
            <person name="Glavina del Rio T."/>
            <person name="Hammon N."/>
            <person name="Israni S."/>
            <person name="Dalin E."/>
            <person name="Tice H."/>
            <person name="Pitluck S."/>
            <person name="Sims D."/>
            <person name="Brettin T."/>
            <person name="Bruce D."/>
            <person name="Tapia R."/>
            <person name="Brainard J."/>
            <person name="Schmutz J."/>
            <person name="Larimer F."/>
            <person name="Land M."/>
            <person name="Hauser L."/>
            <person name="Kyrpides N."/>
            <person name="Mikhailova N."/>
            <person name="Bennet G."/>
            <person name="Cann I."/>
            <person name="Chen J.-S."/>
            <person name="Contreras A.L."/>
            <person name="Jones D."/>
            <person name="Kashket E."/>
            <person name="Mitchell W."/>
            <person name="Stoddard S."/>
            <person name="Schwarz W."/>
            <person name="Qureshi N."/>
            <person name="Young M."/>
            <person name="Shi Z."/>
            <person name="Ezeji T."/>
            <person name="White B."/>
            <person name="Blaschek H."/>
            <person name="Richardson P."/>
        </authorList>
    </citation>
    <scope>NUCLEOTIDE SEQUENCE [LARGE SCALE GENOMIC DNA]</scope>
    <source>
        <strain>ATCC 51743 / NCIMB 8052</strain>
    </source>
</reference>
<keyword id="KW-0119">Carbohydrate metabolism</keyword>
<keyword id="KW-0378">Hydrolase</keyword>
<keyword id="KW-0464">Manganese</keyword>